<comment type="function">
    <text evidence="1">Allows the formation of correctly charged Gln-tRNA(Gln) through the transamidation of misacylated Glu-tRNA(Gln) in organisms which lack glutaminyl-tRNA synthetase. The reaction takes place in the presence of glutamine and ATP through an activated gamma-phospho-Glu-tRNA(Gln).</text>
</comment>
<comment type="catalytic activity">
    <reaction evidence="1">
        <text>L-glutamyl-tRNA(Gln) + L-glutamine + ATP + H2O = L-glutaminyl-tRNA(Gln) + L-glutamate + ADP + phosphate + H(+)</text>
        <dbReference type="Rhea" id="RHEA:17521"/>
        <dbReference type="Rhea" id="RHEA-COMP:9681"/>
        <dbReference type="Rhea" id="RHEA-COMP:9684"/>
        <dbReference type="ChEBI" id="CHEBI:15377"/>
        <dbReference type="ChEBI" id="CHEBI:15378"/>
        <dbReference type="ChEBI" id="CHEBI:29985"/>
        <dbReference type="ChEBI" id="CHEBI:30616"/>
        <dbReference type="ChEBI" id="CHEBI:43474"/>
        <dbReference type="ChEBI" id="CHEBI:58359"/>
        <dbReference type="ChEBI" id="CHEBI:78520"/>
        <dbReference type="ChEBI" id="CHEBI:78521"/>
        <dbReference type="ChEBI" id="CHEBI:456216"/>
        <dbReference type="EC" id="6.3.5.7"/>
    </reaction>
</comment>
<comment type="subunit">
    <text evidence="1">Heterotrimer of A, B and C subunits.</text>
</comment>
<comment type="similarity">
    <text evidence="1">Belongs to the amidase family. GatA subfamily.</text>
</comment>
<reference key="1">
    <citation type="journal article" date="2007" name="Genome Res.">
        <title>Genome sequence of a proteolytic (Group I) Clostridium botulinum strain Hall A and comparative analysis of the clostridial genomes.</title>
        <authorList>
            <person name="Sebaihia M."/>
            <person name="Peck M.W."/>
            <person name="Minton N.P."/>
            <person name="Thomson N.R."/>
            <person name="Holden M.T.G."/>
            <person name="Mitchell W.J."/>
            <person name="Carter A.T."/>
            <person name="Bentley S.D."/>
            <person name="Mason D.R."/>
            <person name="Crossman L."/>
            <person name="Paul C.J."/>
            <person name="Ivens A."/>
            <person name="Wells-Bennik M.H.J."/>
            <person name="Davis I.J."/>
            <person name="Cerdeno-Tarraga A.M."/>
            <person name="Churcher C."/>
            <person name="Quail M.A."/>
            <person name="Chillingworth T."/>
            <person name="Feltwell T."/>
            <person name="Fraser A."/>
            <person name="Goodhead I."/>
            <person name="Hance Z."/>
            <person name="Jagels K."/>
            <person name="Larke N."/>
            <person name="Maddison M."/>
            <person name="Moule S."/>
            <person name="Mungall K."/>
            <person name="Norbertczak H."/>
            <person name="Rabbinowitsch E."/>
            <person name="Sanders M."/>
            <person name="Simmonds M."/>
            <person name="White B."/>
            <person name="Whithead S."/>
            <person name="Parkhill J."/>
        </authorList>
    </citation>
    <scope>NUCLEOTIDE SEQUENCE [LARGE SCALE GENOMIC DNA]</scope>
    <source>
        <strain>Hall / ATCC 3502 / NCTC 13319 / Type A</strain>
    </source>
</reference>
<reference key="2">
    <citation type="journal article" date="2007" name="PLoS ONE">
        <title>Analysis of the neurotoxin complex genes in Clostridium botulinum A1-A4 and B1 strains: BoNT/A3, /Ba4 and /B1 clusters are located within plasmids.</title>
        <authorList>
            <person name="Smith T.J."/>
            <person name="Hill K.K."/>
            <person name="Foley B.T."/>
            <person name="Detter J.C."/>
            <person name="Munk A.C."/>
            <person name="Bruce D.C."/>
            <person name="Doggett N.A."/>
            <person name="Smith L.A."/>
            <person name="Marks J.D."/>
            <person name="Xie G."/>
            <person name="Brettin T.S."/>
        </authorList>
    </citation>
    <scope>NUCLEOTIDE SEQUENCE [LARGE SCALE GENOMIC DNA]</scope>
    <source>
        <strain>Hall / ATCC 3502 / NCTC 13319 / Type A</strain>
    </source>
</reference>
<name>GATA_CLOBH</name>
<sequence>MDLTKLTAHELKDMLSNKEVKAEEITKAFLDRINLVDNKLGAYLYVSEEEAIKKAKEIDGKIEKNEELKALSGIPVGIKDNINVKGMQNTCASKILEGYTSPYDAHVTEKIKQEEGIILGKLNMDEFAMGSSTENSAFKLAKNPWDLERVPGGSSGGSAVAVAGSEATLSLGTDTGGSVRQPASFCGVVGLKPTYGRISRSGVVAFGSTLDQVGPMGKDVEDCALLTSVIAGLDKKDFTTVDKEVPDYKKSLTKDIKGKRIGIPKEFFGDGLDKNVRKSVEEAIKVLEANGAEVKPCSLPLMDYALSAYYIISSAEASSNLARFDGIRYGYRSKNFKDAKDIYLKSRSEGFGDEVKRRIMLGTYVLSAGYYDAYYKKALKVRKLIKDDFQRVFKEFDAIVSPTSPTTAFKVGEKKDDVMSMYLSDIYTVPISVAGVPAISLPCGMIDGLPVGLQIISDYFKEDVLFNLAYNYEQSVDFHKMRADF</sequence>
<accession>A5I6Z3</accession>
<accession>A7G877</accession>
<organism>
    <name type="scientific">Clostridium botulinum (strain Hall / ATCC 3502 / NCTC 13319 / Type A)</name>
    <dbReference type="NCBI Taxonomy" id="441771"/>
    <lineage>
        <taxon>Bacteria</taxon>
        <taxon>Bacillati</taxon>
        <taxon>Bacillota</taxon>
        <taxon>Clostridia</taxon>
        <taxon>Eubacteriales</taxon>
        <taxon>Clostridiaceae</taxon>
        <taxon>Clostridium</taxon>
    </lineage>
</organism>
<gene>
    <name evidence="1" type="primary">gatA</name>
    <name type="ordered locus">CBO3266</name>
    <name type="ordered locus">CLC_3209</name>
</gene>
<dbReference type="EC" id="6.3.5.7" evidence="1"/>
<dbReference type="EMBL" id="CP000727">
    <property type="protein sequence ID" value="ABS37621.1"/>
    <property type="molecule type" value="Genomic_DNA"/>
</dbReference>
<dbReference type="EMBL" id="AM412317">
    <property type="protein sequence ID" value="CAL84825.1"/>
    <property type="molecule type" value="Genomic_DNA"/>
</dbReference>
<dbReference type="RefSeq" id="WP_012048224.1">
    <property type="nucleotide sequence ID" value="NC_009698.1"/>
</dbReference>
<dbReference type="RefSeq" id="YP_001255752.1">
    <property type="nucleotide sequence ID" value="NC_009495.1"/>
</dbReference>
<dbReference type="RefSeq" id="YP_001388992.1">
    <property type="nucleotide sequence ID" value="NC_009698.1"/>
</dbReference>
<dbReference type="SMR" id="A5I6Z3"/>
<dbReference type="GeneID" id="5187520"/>
<dbReference type="KEGG" id="cbh:CLC_3209"/>
<dbReference type="KEGG" id="cbo:CBO3266"/>
<dbReference type="PATRIC" id="fig|413999.7.peg.3242"/>
<dbReference type="HOGENOM" id="CLU_009600_0_3_9"/>
<dbReference type="PRO" id="PR:A5I6Z3"/>
<dbReference type="Proteomes" id="UP000001986">
    <property type="component" value="Chromosome"/>
</dbReference>
<dbReference type="GO" id="GO:0030956">
    <property type="term" value="C:glutamyl-tRNA(Gln) amidotransferase complex"/>
    <property type="evidence" value="ECO:0007669"/>
    <property type="project" value="InterPro"/>
</dbReference>
<dbReference type="GO" id="GO:0005524">
    <property type="term" value="F:ATP binding"/>
    <property type="evidence" value="ECO:0007669"/>
    <property type="project" value="UniProtKB-KW"/>
</dbReference>
<dbReference type="GO" id="GO:0050567">
    <property type="term" value="F:glutaminyl-tRNA synthase (glutamine-hydrolyzing) activity"/>
    <property type="evidence" value="ECO:0007669"/>
    <property type="project" value="UniProtKB-UniRule"/>
</dbReference>
<dbReference type="GO" id="GO:0006412">
    <property type="term" value="P:translation"/>
    <property type="evidence" value="ECO:0007669"/>
    <property type="project" value="UniProtKB-UniRule"/>
</dbReference>
<dbReference type="Gene3D" id="3.90.1300.10">
    <property type="entry name" value="Amidase signature (AS) domain"/>
    <property type="match status" value="1"/>
</dbReference>
<dbReference type="HAMAP" id="MF_00120">
    <property type="entry name" value="GatA"/>
    <property type="match status" value="1"/>
</dbReference>
<dbReference type="InterPro" id="IPR000120">
    <property type="entry name" value="Amidase"/>
</dbReference>
<dbReference type="InterPro" id="IPR020556">
    <property type="entry name" value="Amidase_CS"/>
</dbReference>
<dbReference type="InterPro" id="IPR023631">
    <property type="entry name" value="Amidase_dom"/>
</dbReference>
<dbReference type="InterPro" id="IPR036928">
    <property type="entry name" value="AS_sf"/>
</dbReference>
<dbReference type="InterPro" id="IPR004412">
    <property type="entry name" value="GatA"/>
</dbReference>
<dbReference type="NCBIfam" id="TIGR00132">
    <property type="entry name" value="gatA"/>
    <property type="match status" value="1"/>
</dbReference>
<dbReference type="PANTHER" id="PTHR11895:SF151">
    <property type="entry name" value="GLUTAMYL-TRNA(GLN) AMIDOTRANSFERASE SUBUNIT A"/>
    <property type="match status" value="1"/>
</dbReference>
<dbReference type="PANTHER" id="PTHR11895">
    <property type="entry name" value="TRANSAMIDASE"/>
    <property type="match status" value="1"/>
</dbReference>
<dbReference type="Pfam" id="PF01425">
    <property type="entry name" value="Amidase"/>
    <property type="match status" value="1"/>
</dbReference>
<dbReference type="SUPFAM" id="SSF75304">
    <property type="entry name" value="Amidase signature (AS) enzymes"/>
    <property type="match status" value="1"/>
</dbReference>
<dbReference type="PROSITE" id="PS00571">
    <property type="entry name" value="AMIDASES"/>
    <property type="match status" value="1"/>
</dbReference>
<keyword id="KW-0067">ATP-binding</keyword>
<keyword id="KW-0436">Ligase</keyword>
<keyword id="KW-0547">Nucleotide-binding</keyword>
<keyword id="KW-0648">Protein biosynthesis</keyword>
<keyword id="KW-1185">Reference proteome</keyword>
<feature type="chain" id="PRO_1000015823" description="Glutamyl-tRNA(Gln) amidotransferase subunit A">
    <location>
        <begin position="1"/>
        <end position="485"/>
    </location>
</feature>
<feature type="active site" description="Charge relay system" evidence="1">
    <location>
        <position position="79"/>
    </location>
</feature>
<feature type="active site" description="Charge relay system" evidence="1">
    <location>
        <position position="154"/>
    </location>
</feature>
<feature type="active site" description="Acyl-ester intermediate" evidence="1">
    <location>
        <position position="178"/>
    </location>
</feature>
<evidence type="ECO:0000255" key="1">
    <source>
        <dbReference type="HAMAP-Rule" id="MF_00120"/>
    </source>
</evidence>
<proteinExistence type="inferred from homology"/>
<protein>
    <recommendedName>
        <fullName evidence="1">Glutamyl-tRNA(Gln) amidotransferase subunit A</fullName>
        <shortName evidence="1">Glu-ADT subunit A</shortName>
        <ecNumber evidence="1">6.3.5.7</ecNumber>
    </recommendedName>
</protein>